<keyword id="KW-0175">Coiled coil</keyword>
<keyword id="KW-1185">Reference proteome</keyword>
<sequence length="68" mass="7451">MTNEEKLIAEIDSAGLSAEMLESMPSPEMFPLIIVNLQGRIAELEARETEMLARVDTLIARLAHLGVA</sequence>
<organismHost>
    <name type="scientific">Acinetobacter calcoaceticus</name>
    <dbReference type="NCBI Taxonomy" id="471"/>
</organismHost>
<organismHost>
    <name type="scientific">Escherichia coli</name>
    <dbReference type="NCBI Taxonomy" id="562"/>
</organismHost>
<organismHost>
    <name type="scientific">Proteus mirabilis</name>
    <dbReference type="NCBI Taxonomy" id="584"/>
</organismHost>
<organismHost>
    <name type="scientific">Pseudomonas aeruginosa</name>
    <dbReference type="NCBI Taxonomy" id="287"/>
</organismHost>
<organismHost>
    <name type="scientific">Pseudomonas fluorescens</name>
    <dbReference type="NCBI Taxonomy" id="294"/>
</organismHost>
<organismHost>
    <name type="scientific">Pseudomonas putida</name>
    <name type="common">Arthrobacter siderocapsulatus</name>
    <dbReference type="NCBI Taxonomy" id="303"/>
</organismHost>
<organismHost>
    <name type="scientific">Salmonella typhimurium</name>
    <dbReference type="NCBI Taxonomy" id="90371"/>
</organismHost>
<organismHost>
    <name type="scientific">Vibrio cholerae</name>
    <dbReference type="NCBI Taxonomy" id="666"/>
</organismHost>
<reference key="1">
    <citation type="journal article" date="1991" name="Virology">
        <title>Genome organization of membrane-containing bacteriophage PRD1.</title>
        <authorList>
            <person name="Bamford J.K.H."/>
            <person name="Haenninen A.-L."/>
            <person name="Pakula T.M."/>
            <person name="Ojala P.M."/>
            <person name="Kalkkinen N."/>
            <person name="Frilander M."/>
            <person name="Bamford D.H."/>
        </authorList>
    </citation>
    <scope>NUCLEOTIDE SEQUENCE [GENOMIC DNA]</scope>
</reference>
<reference key="2">
    <citation type="journal article" date="2005" name="J. Mol. Biol.">
        <title>A snapshot of viral evolution from genome analysis of the tectiviridae family.</title>
        <authorList>
            <person name="Saren A.M."/>
            <person name="Ravantti J.J."/>
            <person name="Benson S.D."/>
            <person name="Burnett R.M."/>
            <person name="Paulin L."/>
            <person name="Bamford D.H."/>
            <person name="Bamford J.K.H."/>
        </authorList>
    </citation>
    <scope>NUCLEOTIDE SEQUENCE [GENOMIC DNA]</scope>
</reference>
<protein>
    <recommendedName>
        <fullName>Protein P33</fullName>
    </recommendedName>
</protein>
<organism>
    <name type="scientific">Enterobacteria phage PRD1</name>
    <name type="common">Bacteriophage PRD1</name>
    <dbReference type="NCBI Taxonomy" id="10658"/>
    <lineage>
        <taxon>Viruses</taxon>
        <taxon>Varidnaviria</taxon>
        <taxon>Bamfordvirae</taxon>
        <taxon>Preplasmiviricota</taxon>
        <taxon>Tectiliviricetes</taxon>
        <taxon>Kalamavirales</taxon>
        <taxon>Tectiviridae</taxon>
        <taxon>Alphatectivirus</taxon>
        <taxon>Alphatectivirus PRD1</taxon>
    </lineage>
</organism>
<comment type="function">
    <text>Assembly protein.</text>
</comment>
<comment type="miscellaneous">
    <text>PRD1 virions are composed of a tail-less icosahedral capsid of diameter 63 nm, an inner protein-lipid membrane, and a dsDNA genome which is located inside the lipid vesicle. The DNA is packaged into a preformed procapsid. The internal membrane plays an active role in DNA delivery to the host cell by forming a tubular structure used for injecting the DNA into the host cytoplasm.</text>
</comment>
<accession>Q3T4N8</accession>
<evidence type="ECO:0000255" key="1"/>
<feature type="chain" id="PRO_0000234091" description="Protein P33">
    <location>
        <begin position="1"/>
        <end position="68"/>
    </location>
</feature>
<feature type="coiled-coil region" evidence="1">
    <location>
        <begin position="34"/>
        <end position="63"/>
    </location>
</feature>
<gene>
    <name type="primary">XXXIII</name>
</gene>
<dbReference type="EMBL" id="AY848689">
    <property type="protein sequence ID" value="AAX45920.1"/>
    <property type="molecule type" value="Genomic_DNA"/>
</dbReference>
<dbReference type="RefSeq" id="YP_001542608.1">
    <property type="nucleotide sequence ID" value="NC_001421.2"/>
</dbReference>
<dbReference type="RefSeq" id="YP_009639962.1">
    <property type="nucleotide sequence ID" value="NC_001421.2"/>
</dbReference>
<dbReference type="SMR" id="Q3T4N8"/>
<dbReference type="GeneID" id="5729503"/>
<dbReference type="OrthoDB" id="35914at10239"/>
<dbReference type="Proteomes" id="UP000002143">
    <property type="component" value="Segment"/>
</dbReference>
<name>VP33_BPPRD</name>
<proteinExistence type="predicted"/>